<gene>
    <name evidence="1" type="primary">infA</name>
    <name type="ordered locus">Rcas_4004</name>
</gene>
<name>IF1_ROSCS</name>
<reference key="1">
    <citation type="submission" date="2007-08" db="EMBL/GenBank/DDBJ databases">
        <title>Complete sequence of Roseiflexus castenholzii DSM 13941.</title>
        <authorList>
            <consortium name="US DOE Joint Genome Institute"/>
            <person name="Copeland A."/>
            <person name="Lucas S."/>
            <person name="Lapidus A."/>
            <person name="Barry K."/>
            <person name="Glavina del Rio T."/>
            <person name="Dalin E."/>
            <person name="Tice H."/>
            <person name="Pitluck S."/>
            <person name="Thompson L.S."/>
            <person name="Brettin T."/>
            <person name="Bruce D."/>
            <person name="Detter J.C."/>
            <person name="Han C."/>
            <person name="Tapia R."/>
            <person name="Schmutz J."/>
            <person name="Larimer F."/>
            <person name="Land M."/>
            <person name="Hauser L."/>
            <person name="Kyrpides N."/>
            <person name="Mikhailova N."/>
            <person name="Bryant D.A."/>
            <person name="Hanada S."/>
            <person name="Tsukatani Y."/>
            <person name="Richardson P."/>
        </authorList>
    </citation>
    <scope>NUCLEOTIDE SEQUENCE [LARGE SCALE GENOMIC DNA]</scope>
    <source>
        <strain>DSM 13941 / HLO8</strain>
    </source>
</reference>
<dbReference type="EMBL" id="CP000804">
    <property type="protein sequence ID" value="ABU60037.1"/>
    <property type="molecule type" value="Genomic_DNA"/>
</dbReference>
<dbReference type="RefSeq" id="WP_011955923.1">
    <property type="nucleotide sequence ID" value="NC_009767.1"/>
</dbReference>
<dbReference type="SMR" id="A7NR41"/>
<dbReference type="STRING" id="383372.Rcas_4004"/>
<dbReference type="KEGG" id="rca:Rcas_4004"/>
<dbReference type="eggNOG" id="COG0361">
    <property type="taxonomic scope" value="Bacteria"/>
</dbReference>
<dbReference type="HOGENOM" id="CLU_151267_1_0_0"/>
<dbReference type="OrthoDB" id="9803250at2"/>
<dbReference type="Proteomes" id="UP000000263">
    <property type="component" value="Chromosome"/>
</dbReference>
<dbReference type="GO" id="GO:0005829">
    <property type="term" value="C:cytosol"/>
    <property type="evidence" value="ECO:0007669"/>
    <property type="project" value="TreeGrafter"/>
</dbReference>
<dbReference type="GO" id="GO:0043022">
    <property type="term" value="F:ribosome binding"/>
    <property type="evidence" value="ECO:0007669"/>
    <property type="project" value="UniProtKB-UniRule"/>
</dbReference>
<dbReference type="GO" id="GO:0019843">
    <property type="term" value="F:rRNA binding"/>
    <property type="evidence" value="ECO:0007669"/>
    <property type="project" value="UniProtKB-UniRule"/>
</dbReference>
<dbReference type="GO" id="GO:0003743">
    <property type="term" value="F:translation initiation factor activity"/>
    <property type="evidence" value="ECO:0007669"/>
    <property type="project" value="UniProtKB-UniRule"/>
</dbReference>
<dbReference type="CDD" id="cd04451">
    <property type="entry name" value="S1_IF1"/>
    <property type="match status" value="1"/>
</dbReference>
<dbReference type="FunFam" id="2.40.50.140:FF:000002">
    <property type="entry name" value="Translation initiation factor IF-1"/>
    <property type="match status" value="1"/>
</dbReference>
<dbReference type="Gene3D" id="2.40.50.140">
    <property type="entry name" value="Nucleic acid-binding proteins"/>
    <property type="match status" value="1"/>
</dbReference>
<dbReference type="HAMAP" id="MF_00075">
    <property type="entry name" value="IF_1"/>
    <property type="match status" value="1"/>
</dbReference>
<dbReference type="InterPro" id="IPR012340">
    <property type="entry name" value="NA-bd_OB-fold"/>
</dbReference>
<dbReference type="InterPro" id="IPR006196">
    <property type="entry name" value="RNA-binding_domain_S1_IF1"/>
</dbReference>
<dbReference type="InterPro" id="IPR003029">
    <property type="entry name" value="S1_domain"/>
</dbReference>
<dbReference type="InterPro" id="IPR004368">
    <property type="entry name" value="TIF_IF1"/>
</dbReference>
<dbReference type="NCBIfam" id="TIGR00008">
    <property type="entry name" value="infA"/>
    <property type="match status" value="1"/>
</dbReference>
<dbReference type="PANTHER" id="PTHR33370">
    <property type="entry name" value="TRANSLATION INITIATION FACTOR IF-1, CHLOROPLASTIC"/>
    <property type="match status" value="1"/>
</dbReference>
<dbReference type="PANTHER" id="PTHR33370:SF1">
    <property type="entry name" value="TRANSLATION INITIATION FACTOR IF-1, CHLOROPLASTIC"/>
    <property type="match status" value="1"/>
</dbReference>
<dbReference type="Pfam" id="PF01176">
    <property type="entry name" value="eIF-1a"/>
    <property type="match status" value="1"/>
</dbReference>
<dbReference type="SMART" id="SM00316">
    <property type="entry name" value="S1"/>
    <property type="match status" value="1"/>
</dbReference>
<dbReference type="SUPFAM" id="SSF50249">
    <property type="entry name" value="Nucleic acid-binding proteins"/>
    <property type="match status" value="1"/>
</dbReference>
<dbReference type="PROSITE" id="PS50832">
    <property type="entry name" value="S1_IF1_TYPE"/>
    <property type="match status" value="1"/>
</dbReference>
<proteinExistence type="inferred from homology"/>
<comment type="function">
    <text evidence="1">One of the essential components for the initiation of protein synthesis. Stabilizes the binding of IF-2 and IF-3 on the 30S subunit to which N-formylmethionyl-tRNA(fMet) subsequently binds. Helps modulate mRNA selection, yielding the 30S pre-initiation complex (PIC). Upon addition of the 50S ribosomal subunit IF-1, IF-2 and IF-3 are released leaving the mature 70S translation initiation complex.</text>
</comment>
<comment type="subunit">
    <text evidence="1">Component of the 30S ribosomal translation pre-initiation complex which assembles on the 30S ribosome in the order IF-2 and IF-3, IF-1 and N-formylmethionyl-tRNA(fMet); mRNA recruitment can occur at any time during PIC assembly.</text>
</comment>
<comment type="subcellular location">
    <subcellularLocation>
        <location evidence="1">Cytoplasm</location>
    </subcellularLocation>
</comment>
<comment type="similarity">
    <text evidence="1">Belongs to the IF-1 family.</text>
</comment>
<protein>
    <recommendedName>
        <fullName evidence="1">Translation initiation factor IF-1</fullName>
    </recommendedName>
</protein>
<feature type="chain" id="PRO_0000338908" description="Translation initiation factor IF-1">
    <location>
        <begin position="1"/>
        <end position="73"/>
    </location>
</feature>
<feature type="domain" description="S1-like" evidence="1">
    <location>
        <begin position="1"/>
        <end position="73"/>
    </location>
</feature>
<accession>A7NR41</accession>
<keyword id="KW-0963">Cytoplasm</keyword>
<keyword id="KW-0396">Initiation factor</keyword>
<keyword id="KW-0648">Protein biosynthesis</keyword>
<keyword id="KW-1185">Reference proteome</keyword>
<keyword id="KW-0694">RNA-binding</keyword>
<keyword id="KW-0699">rRNA-binding</keyword>
<organism>
    <name type="scientific">Roseiflexus castenholzii (strain DSM 13941 / HLO8)</name>
    <dbReference type="NCBI Taxonomy" id="383372"/>
    <lineage>
        <taxon>Bacteria</taxon>
        <taxon>Bacillati</taxon>
        <taxon>Chloroflexota</taxon>
        <taxon>Chloroflexia</taxon>
        <taxon>Chloroflexales</taxon>
        <taxon>Roseiflexineae</taxon>
        <taxon>Roseiflexaceae</taxon>
        <taxon>Roseiflexus</taxon>
    </lineage>
</organism>
<sequence length="73" mass="8580">MSKKKDVIEMEGTITEPLPNAMFRVKLENGHEVLAHISGRMRMNYIRILKGDRVLVELSPYDLTRGRITYRYK</sequence>
<evidence type="ECO:0000255" key="1">
    <source>
        <dbReference type="HAMAP-Rule" id="MF_00075"/>
    </source>
</evidence>